<organism>
    <name type="scientific">Buchnera aphidicola subsp. Acyrthosiphon pisum (strain APS)</name>
    <name type="common">Acyrthosiphon pisum symbiotic bacterium</name>
    <dbReference type="NCBI Taxonomy" id="107806"/>
    <lineage>
        <taxon>Bacteria</taxon>
        <taxon>Pseudomonadati</taxon>
        <taxon>Pseudomonadota</taxon>
        <taxon>Gammaproteobacteria</taxon>
        <taxon>Enterobacterales</taxon>
        <taxon>Erwiniaceae</taxon>
        <taxon>Buchnera</taxon>
    </lineage>
</organism>
<evidence type="ECO:0000250" key="1"/>
<evidence type="ECO:0000250" key="2">
    <source>
        <dbReference type="UniProtKB" id="P00914"/>
    </source>
</evidence>
<evidence type="ECO:0000305" key="3"/>
<gene>
    <name type="primary">phrB</name>
    <name type="ordered locus">BU300</name>
</gene>
<accession>P57386</accession>
<name>PHR_BUCAI</name>
<dbReference type="EC" id="4.1.99.3"/>
<dbReference type="EMBL" id="BA000003">
    <property type="protein sequence ID" value="BAB13009.1"/>
    <property type="molecule type" value="Genomic_DNA"/>
</dbReference>
<dbReference type="RefSeq" id="NP_240123.1">
    <property type="nucleotide sequence ID" value="NC_002528.1"/>
</dbReference>
<dbReference type="RefSeq" id="WP_010896056.1">
    <property type="nucleotide sequence ID" value="NC_002528.1"/>
</dbReference>
<dbReference type="SMR" id="P57386"/>
<dbReference type="STRING" id="563178.BUAP5A_294"/>
<dbReference type="EnsemblBacteria" id="BAB13009">
    <property type="protein sequence ID" value="BAB13009"/>
    <property type="gene ID" value="BAB13009"/>
</dbReference>
<dbReference type="KEGG" id="buc:BU300"/>
<dbReference type="PATRIC" id="fig|107806.10.peg.311"/>
<dbReference type="eggNOG" id="COG0415">
    <property type="taxonomic scope" value="Bacteria"/>
</dbReference>
<dbReference type="HOGENOM" id="CLU_010348_2_0_6"/>
<dbReference type="Proteomes" id="UP000001806">
    <property type="component" value="Chromosome"/>
</dbReference>
<dbReference type="GO" id="GO:0003904">
    <property type="term" value="F:deoxyribodipyrimidine photo-lyase activity"/>
    <property type="evidence" value="ECO:0007669"/>
    <property type="project" value="UniProtKB-EC"/>
</dbReference>
<dbReference type="GO" id="GO:0003677">
    <property type="term" value="F:DNA binding"/>
    <property type="evidence" value="ECO:0007669"/>
    <property type="project" value="UniProtKB-KW"/>
</dbReference>
<dbReference type="GO" id="GO:0071949">
    <property type="term" value="F:FAD binding"/>
    <property type="evidence" value="ECO:0007669"/>
    <property type="project" value="TreeGrafter"/>
</dbReference>
<dbReference type="GO" id="GO:0006281">
    <property type="term" value="P:DNA repair"/>
    <property type="evidence" value="ECO:0007669"/>
    <property type="project" value="UniProtKB-KW"/>
</dbReference>
<dbReference type="GO" id="GO:0009416">
    <property type="term" value="P:response to light stimulus"/>
    <property type="evidence" value="ECO:0007669"/>
    <property type="project" value="TreeGrafter"/>
</dbReference>
<dbReference type="FunFam" id="1.10.579.10:FF:000003">
    <property type="entry name" value="Deoxyribodipyrimidine photo-lyase"/>
    <property type="match status" value="1"/>
</dbReference>
<dbReference type="Gene3D" id="1.25.40.80">
    <property type="match status" value="1"/>
</dbReference>
<dbReference type="Gene3D" id="1.10.579.10">
    <property type="entry name" value="DNA Cyclobutane Dipyrimidine Photolyase, subunit A, domain 3"/>
    <property type="match status" value="1"/>
</dbReference>
<dbReference type="Gene3D" id="3.40.50.620">
    <property type="entry name" value="HUPs"/>
    <property type="match status" value="1"/>
</dbReference>
<dbReference type="InterPro" id="IPR036134">
    <property type="entry name" value="Crypto/Photolyase_FAD-like_sf"/>
</dbReference>
<dbReference type="InterPro" id="IPR036155">
    <property type="entry name" value="Crypto/Photolyase_N_sf"/>
</dbReference>
<dbReference type="InterPro" id="IPR005101">
    <property type="entry name" value="Cryptochr/Photolyase_FAD-bd"/>
</dbReference>
<dbReference type="InterPro" id="IPR002081">
    <property type="entry name" value="Cryptochrome/DNA_photolyase_1"/>
</dbReference>
<dbReference type="InterPro" id="IPR018394">
    <property type="entry name" value="DNA_photolyase_1_CS_C"/>
</dbReference>
<dbReference type="InterPro" id="IPR006050">
    <property type="entry name" value="DNA_photolyase_N"/>
</dbReference>
<dbReference type="InterPro" id="IPR014729">
    <property type="entry name" value="Rossmann-like_a/b/a_fold"/>
</dbReference>
<dbReference type="NCBIfam" id="NF007955">
    <property type="entry name" value="PRK10674.1"/>
    <property type="match status" value="1"/>
</dbReference>
<dbReference type="PANTHER" id="PTHR11455">
    <property type="entry name" value="CRYPTOCHROME"/>
    <property type="match status" value="1"/>
</dbReference>
<dbReference type="PANTHER" id="PTHR11455:SF9">
    <property type="entry name" value="CRYPTOCHROME CIRCADIAN CLOCK 5 ISOFORM X1"/>
    <property type="match status" value="1"/>
</dbReference>
<dbReference type="Pfam" id="PF00875">
    <property type="entry name" value="DNA_photolyase"/>
    <property type="match status" value="1"/>
</dbReference>
<dbReference type="Pfam" id="PF03441">
    <property type="entry name" value="FAD_binding_7"/>
    <property type="match status" value="1"/>
</dbReference>
<dbReference type="PRINTS" id="PR00147">
    <property type="entry name" value="DNAPHOTLYASE"/>
</dbReference>
<dbReference type="SUPFAM" id="SSF48173">
    <property type="entry name" value="Cryptochrome/photolyase FAD-binding domain"/>
    <property type="match status" value="1"/>
</dbReference>
<dbReference type="SUPFAM" id="SSF52425">
    <property type="entry name" value="Cryptochrome/photolyase, N-terminal domain"/>
    <property type="match status" value="1"/>
</dbReference>
<dbReference type="PROSITE" id="PS00394">
    <property type="entry name" value="DNA_PHOTOLYASES_1_1"/>
    <property type="match status" value="1"/>
</dbReference>
<dbReference type="PROSITE" id="PS00691">
    <property type="entry name" value="DNA_PHOTOLYASES_1_2"/>
    <property type="match status" value="1"/>
</dbReference>
<dbReference type="PROSITE" id="PS51645">
    <property type="entry name" value="PHR_CRY_ALPHA_BETA"/>
    <property type="match status" value="1"/>
</dbReference>
<keyword id="KW-0157">Chromophore</keyword>
<keyword id="KW-0227">DNA damage</keyword>
<keyword id="KW-0234">DNA repair</keyword>
<keyword id="KW-0238">DNA-binding</keyword>
<keyword id="KW-0274">FAD</keyword>
<keyword id="KW-0285">Flavoprotein</keyword>
<keyword id="KW-0456">Lyase</keyword>
<keyword id="KW-0547">Nucleotide-binding</keyword>
<keyword id="KW-1185">Reference proteome</keyword>
<feature type="chain" id="PRO_0000085106" description="Deoxyribodipyrimidine photo-lyase">
    <location>
        <begin position="1"/>
        <end position="483"/>
    </location>
</feature>
<feature type="domain" description="Photolyase/cryptochrome alpha/beta">
    <location>
        <begin position="2"/>
        <end position="136"/>
    </location>
</feature>
<feature type="region of interest" description="Interaction with DNA" evidence="1">
    <location>
        <begin position="278"/>
        <end position="285"/>
    </location>
</feature>
<feature type="region of interest" description="Interaction with DNA" evidence="1">
    <location>
        <begin position="345"/>
        <end position="346"/>
    </location>
</feature>
<feature type="binding site" evidence="2">
    <location>
        <position position="109"/>
    </location>
    <ligand>
        <name>(6R)-5,10-methylene-5,6,7,8-tetrahydrofolate</name>
        <dbReference type="ChEBI" id="CHEBI:15636"/>
    </ligand>
</feature>
<feature type="binding site" evidence="2">
    <location>
        <position position="110"/>
    </location>
    <ligand>
        <name>(6R)-5,10-methylene-5,6,7,8-tetrahydrofolate</name>
        <dbReference type="ChEBI" id="CHEBI:15636"/>
    </ligand>
</feature>
<feature type="binding site" evidence="1">
    <location>
        <position position="225"/>
    </location>
    <ligand>
        <name>FAD</name>
        <dbReference type="ChEBI" id="CHEBI:57692"/>
    </ligand>
</feature>
<feature type="binding site" evidence="1">
    <location>
        <position position="229"/>
    </location>
    <ligand>
        <name>DNA</name>
        <dbReference type="ChEBI" id="CHEBI:16991"/>
    </ligand>
</feature>
<feature type="binding site" evidence="1">
    <location>
        <begin position="237"/>
        <end position="241"/>
    </location>
    <ligand>
        <name>FAD</name>
        <dbReference type="ChEBI" id="CHEBI:57692"/>
    </ligand>
</feature>
<feature type="binding site" evidence="1">
    <location>
        <begin position="376"/>
        <end position="378"/>
    </location>
    <ligand>
        <name>FAD</name>
        <dbReference type="ChEBI" id="CHEBI:57692"/>
    </ligand>
</feature>
<feature type="binding site" evidence="1">
    <location>
        <position position="408"/>
    </location>
    <ligand>
        <name>DNA</name>
        <dbReference type="ChEBI" id="CHEBI:16991"/>
    </ligand>
</feature>
<feature type="site" description="Electron transfer via tryptophanyl radical" evidence="1">
    <location>
        <position position="310"/>
    </location>
</feature>
<feature type="site" description="Electron transfer via tryptophanyl radical" evidence="1">
    <location>
        <position position="363"/>
    </location>
</feature>
<feature type="site" description="Electron transfer via tryptophanyl radical" evidence="1">
    <location>
        <position position="386"/>
    </location>
</feature>
<sequence length="483" mass="57530">MQKNLIWFRNDLRVYDNTALHQACQNDTDKVISLFISTPKQWHNQSVSKKKISFMYYHLISLQKELLKLNIILYYHESTDFLNSIEYLIFFCKKHKVNNLFYNYEYAINERYRDYLVKKKLSQKGFLVKGFHDNLLFSNRQIRNQKNETYKVFTFFKKKVIQNLHNNIPQCFPVPSKRKSDRDIFLTSISLKNVNLNFNKNFFPVGEKEAINRLKNFCIYKFNDYFLKRDYPFLDATSMLSPYLSAGIISSRYCLKVLLKTKNSLPLNVLLTSPWFDQILWREFYYHLLIGFPKISRSESLVTWEKEIHWINNIKHFNAWKEGNTGFPIIDAGMRQLNELGWMHNRLRMITSSFLVKNLLINWREGEEHFISNLIDGDLALNNGGWQWSASVGCDSVPYIRIFNPLHQSKTFDESGNFIKKFIPELKNVPNHHIHQPHEWSKQKNFKIDYPNPIINYSESRKTSLSLFKQARLKLHKNGLKNS</sequence>
<reference key="1">
    <citation type="journal article" date="2000" name="Nature">
        <title>Genome sequence of the endocellular bacterial symbiont of aphids Buchnera sp. APS.</title>
        <authorList>
            <person name="Shigenobu S."/>
            <person name="Watanabe H."/>
            <person name="Hattori M."/>
            <person name="Sakaki Y."/>
            <person name="Ishikawa H."/>
        </authorList>
    </citation>
    <scope>NUCLEOTIDE SEQUENCE [LARGE SCALE GENOMIC DNA]</scope>
    <source>
        <strain>APS</strain>
    </source>
</reference>
<comment type="function">
    <text evidence="1">Involved in repair of UV radiation-induced DNA damage. Catalyzes the light-dependent monomerization (300-600 nm) of cyclobutyl pyrimidine dimers (in cis-syn configuration), which are formed between adjacent bases on the same DNA strand upon exposure to ultraviolet radiation (By similarity).</text>
</comment>
<comment type="catalytic activity">
    <reaction>
        <text>cyclobutadipyrimidine (in DNA) = 2 pyrimidine residues (in DNA).</text>
        <dbReference type="EC" id="4.1.99.3"/>
    </reaction>
</comment>
<comment type="cofactor">
    <cofactor evidence="1">
        <name>FAD</name>
        <dbReference type="ChEBI" id="CHEBI:57692"/>
    </cofactor>
    <text evidence="1">Binds 1 FAD per subunit.</text>
</comment>
<comment type="cofactor">
    <cofactor evidence="2">
        <name>(6R)-5,10-methylene-5,6,7,8-tetrahydrofolate</name>
        <dbReference type="ChEBI" id="CHEBI:15636"/>
    </cofactor>
    <text evidence="2">Binds 1 5,10-methenyltetrahydrofolate (MTHF) non-covalently per subunit.</text>
</comment>
<comment type="subunit">
    <text evidence="1">Monomer.</text>
</comment>
<comment type="similarity">
    <text evidence="3">Belongs to the DNA photolyase class-1 family.</text>
</comment>
<protein>
    <recommendedName>
        <fullName>Deoxyribodipyrimidine photo-lyase</fullName>
        <ecNumber>4.1.99.3</ecNumber>
    </recommendedName>
    <alternativeName>
        <fullName>DNA photolyase</fullName>
    </alternativeName>
    <alternativeName>
        <fullName>Photoreactivating enzyme</fullName>
    </alternativeName>
</protein>
<proteinExistence type="inferred from homology"/>